<organism>
    <name type="scientific">Arabidopsis thaliana</name>
    <name type="common">Mouse-ear cress</name>
    <dbReference type="NCBI Taxonomy" id="3702"/>
    <lineage>
        <taxon>Eukaryota</taxon>
        <taxon>Viridiplantae</taxon>
        <taxon>Streptophyta</taxon>
        <taxon>Embryophyta</taxon>
        <taxon>Tracheophyta</taxon>
        <taxon>Spermatophyta</taxon>
        <taxon>Magnoliopsida</taxon>
        <taxon>eudicotyledons</taxon>
        <taxon>Gunneridae</taxon>
        <taxon>Pentapetalae</taxon>
        <taxon>rosids</taxon>
        <taxon>malvids</taxon>
        <taxon>Brassicales</taxon>
        <taxon>Brassicaceae</taxon>
        <taxon>Camelineae</taxon>
        <taxon>Arabidopsis</taxon>
    </lineage>
</organism>
<evidence type="ECO:0000250" key="1"/>
<evidence type="ECO:0000255" key="2"/>
<evidence type="ECO:0000256" key="3">
    <source>
        <dbReference type="SAM" id="MobiDB-lite"/>
    </source>
</evidence>
<evidence type="ECO:0000303" key="4">
    <source>
    </source>
</evidence>
<evidence type="ECO:0000305" key="5"/>
<evidence type="ECO:0000312" key="6">
    <source>
        <dbReference type="Araport" id="AT1G12600"/>
    </source>
</evidence>
<evidence type="ECO:0000312" key="7">
    <source>
        <dbReference type="EMBL" id="AAF79647.1"/>
    </source>
</evidence>
<evidence type="ECO:0000312" key="8">
    <source>
        <dbReference type="EMBL" id="AAF88097.1"/>
    </source>
</evidence>
<accession>Q9LDX3</accession>
<protein>
    <recommendedName>
        <fullName evidence="4">UDP-galactose/UDP-glucose transporter 4</fullName>
        <shortName evidence="4">AtUTr4</shortName>
    </recommendedName>
</protein>
<gene>
    <name evidence="4" type="primary">UTR4</name>
    <name evidence="6" type="ordered locus">At1g12600</name>
    <name evidence="7" type="ORF">F5O11.33</name>
    <name evidence="8" type="ORF">T12C24.13</name>
</gene>
<dbReference type="EMBL" id="AC025416">
    <property type="protein sequence ID" value="AAF79647.1"/>
    <property type="molecule type" value="Genomic_DNA"/>
</dbReference>
<dbReference type="EMBL" id="AC025417">
    <property type="protein sequence ID" value="AAF88097.1"/>
    <property type="molecule type" value="Genomic_DNA"/>
</dbReference>
<dbReference type="EMBL" id="CP002684">
    <property type="protein sequence ID" value="AEE28900.1"/>
    <property type="molecule type" value="Genomic_DNA"/>
</dbReference>
<dbReference type="EMBL" id="AY800577">
    <property type="protein sequence ID" value="AAV68813.1"/>
    <property type="molecule type" value="mRNA"/>
</dbReference>
<dbReference type="EMBL" id="AY924666">
    <property type="protein sequence ID" value="AAX23741.1"/>
    <property type="molecule type" value="mRNA"/>
</dbReference>
<dbReference type="RefSeq" id="NP_172720.1">
    <property type="nucleotide sequence ID" value="NM_101130.3"/>
</dbReference>
<dbReference type="SMR" id="Q9LDX3"/>
<dbReference type="FunCoup" id="Q9LDX3">
    <property type="interactions" value="1485"/>
</dbReference>
<dbReference type="STRING" id="3702.Q9LDX3"/>
<dbReference type="PaxDb" id="3702-AT1G12600.1"/>
<dbReference type="ProteomicsDB" id="228539"/>
<dbReference type="EnsemblPlants" id="AT1G12600.1">
    <property type="protein sequence ID" value="AT1G12600.1"/>
    <property type="gene ID" value="AT1G12600"/>
</dbReference>
<dbReference type="GeneID" id="837816"/>
<dbReference type="Gramene" id="AT1G12600.1">
    <property type="protein sequence ID" value="AT1G12600.1"/>
    <property type="gene ID" value="AT1G12600"/>
</dbReference>
<dbReference type="KEGG" id="ath:AT1G12600"/>
<dbReference type="Araport" id="AT1G12600"/>
<dbReference type="TAIR" id="AT1G12600"/>
<dbReference type="eggNOG" id="KOG1582">
    <property type="taxonomic scope" value="Eukaryota"/>
</dbReference>
<dbReference type="HOGENOM" id="CLU_036019_2_1_1"/>
<dbReference type="InParanoid" id="Q9LDX3"/>
<dbReference type="OMA" id="QIMFKSA"/>
<dbReference type="OrthoDB" id="1601at2759"/>
<dbReference type="PhylomeDB" id="Q9LDX3"/>
<dbReference type="PRO" id="PR:Q9LDX3"/>
<dbReference type="Proteomes" id="UP000006548">
    <property type="component" value="Chromosome 1"/>
</dbReference>
<dbReference type="ExpressionAtlas" id="Q9LDX3">
    <property type="expression patterns" value="baseline and differential"/>
</dbReference>
<dbReference type="GO" id="GO:0016020">
    <property type="term" value="C:membrane"/>
    <property type="evidence" value="ECO:0007669"/>
    <property type="project" value="UniProtKB-SubCell"/>
</dbReference>
<dbReference type="GO" id="GO:0015297">
    <property type="term" value="F:antiporter activity"/>
    <property type="evidence" value="ECO:0007669"/>
    <property type="project" value="UniProtKB-KW"/>
</dbReference>
<dbReference type="InterPro" id="IPR013657">
    <property type="entry name" value="SCL35B1-4/HUT1"/>
</dbReference>
<dbReference type="PANTHER" id="PTHR10778:SF8">
    <property type="entry name" value="ADENOSINE 3'-PHOSPHO 5'-PHOSPHOSULFATE TRANSPORTER 2"/>
    <property type="match status" value="1"/>
</dbReference>
<dbReference type="PANTHER" id="PTHR10778">
    <property type="entry name" value="SOLUTE CARRIER FAMILY 35 MEMBER B"/>
    <property type="match status" value="1"/>
</dbReference>
<dbReference type="Pfam" id="PF08449">
    <property type="entry name" value="UAA"/>
    <property type="match status" value="1"/>
</dbReference>
<dbReference type="SUPFAM" id="SSF103481">
    <property type="entry name" value="Multidrug resistance efflux transporter EmrE"/>
    <property type="match status" value="1"/>
</dbReference>
<feature type="chain" id="PRO_0000415963" description="UDP-galactose/UDP-glucose transporter 4">
    <location>
        <begin position="1"/>
        <end position="349"/>
    </location>
</feature>
<feature type="transmembrane region" description="Helical" evidence="2">
    <location>
        <begin position="23"/>
        <end position="43"/>
    </location>
</feature>
<feature type="transmembrane region" description="Helical" evidence="2">
    <location>
        <begin position="56"/>
        <end position="76"/>
    </location>
</feature>
<feature type="transmembrane region" description="Helical" evidence="2">
    <location>
        <begin position="115"/>
        <end position="135"/>
    </location>
</feature>
<feature type="transmembrane region" description="Helical" evidence="2">
    <location>
        <begin position="140"/>
        <end position="160"/>
    </location>
</feature>
<feature type="transmembrane region" description="Helical" evidence="2">
    <location>
        <begin position="167"/>
        <end position="187"/>
    </location>
</feature>
<feature type="transmembrane region" description="Helical" evidence="2">
    <location>
        <begin position="205"/>
        <end position="225"/>
    </location>
</feature>
<feature type="transmembrane region" description="Helical" evidence="2">
    <location>
        <begin position="248"/>
        <end position="268"/>
    </location>
</feature>
<feature type="transmembrane region" description="Helical" evidence="2">
    <location>
        <begin position="293"/>
        <end position="313"/>
    </location>
</feature>
<feature type="region of interest" description="Disordered" evidence="3">
    <location>
        <begin position="316"/>
        <end position="349"/>
    </location>
</feature>
<feature type="compositionally biased region" description="Acidic residues" evidence="3">
    <location>
        <begin position="340"/>
        <end position="349"/>
    </location>
</feature>
<sequence>MKTNSEEQMIKLFGIPLSDKPRWQQFLICSSGFFFGYLVNGICEEYVYNRLKFSYGWYFTFAQGLVYIALIYMYGFRTKQMVNPWKTYVKLSGVLMGSHGLTKGSLAYLNYPAQIMFKSTKVLPVMVMGAFIPGLRRKYPVHEYISAMLLVIGLILFTLADAHTSPNFSIIGVMMISGALIMDAFLGNLQEAIFTMNPETTQMEMLFCSTVVGLPFLLAPMILTGELFTAWNSCAQHPYVYGVLVFEAMATFIGQVSVLSLIALFGAATTAMITTARKAVTLLLSYLIFTKPLTEQHGTGLLLIFMGIILKMVPDPNPNPKSSGSGQTPGKLERVKFEKEDDEESRPLV</sequence>
<reference key="1">
    <citation type="journal article" date="2000" name="Nature">
        <title>Sequence and analysis of chromosome 1 of the plant Arabidopsis thaliana.</title>
        <authorList>
            <person name="Theologis A."/>
            <person name="Ecker J.R."/>
            <person name="Palm C.J."/>
            <person name="Federspiel N.A."/>
            <person name="Kaul S."/>
            <person name="White O."/>
            <person name="Alonso J."/>
            <person name="Altafi H."/>
            <person name="Araujo R."/>
            <person name="Bowman C.L."/>
            <person name="Brooks S.Y."/>
            <person name="Buehler E."/>
            <person name="Chan A."/>
            <person name="Chao Q."/>
            <person name="Chen H."/>
            <person name="Cheuk R.F."/>
            <person name="Chin C.W."/>
            <person name="Chung M.K."/>
            <person name="Conn L."/>
            <person name="Conway A.B."/>
            <person name="Conway A.R."/>
            <person name="Creasy T.H."/>
            <person name="Dewar K."/>
            <person name="Dunn P."/>
            <person name="Etgu P."/>
            <person name="Feldblyum T.V."/>
            <person name="Feng J.-D."/>
            <person name="Fong B."/>
            <person name="Fujii C.Y."/>
            <person name="Gill J.E."/>
            <person name="Goldsmith A.D."/>
            <person name="Haas B."/>
            <person name="Hansen N.F."/>
            <person name="Hughes B."/>
            <person name="Huizar L."/>
            <person name="Hunter J.L."/>
            <person name="Jenkins J."/>
            <person name="Johnson-Hopson C."/>
            <person name="Khan S."/>
            <person name="Khaykin E."/>
            <person name="Kim C.J."/>
            <person name="Koo H.L."/>
            <person name="Kremenetskaia I."/>
            <person name="Kurtz D.B."/>
            <person name="Kwan A."/>
            <person name="Lam B."/>
            <person name="Langin-Hooper S."/>
            <person name="Lee A."/>
            <person name="Lee J.M."/>
            <person name="Lenz C.A."/>
            <person name="Li J.H."/>
            <person name="Li Y.-P."/>
            <person name="Lin X."/>
            <person name="Liu S.X."/>
            <person name="Liu Z.A."/>
            <person name="Luros J.S."/>
            <person name="Maiti R."/>
            <person name="Marziali A."/>
            <person name="Militscher J."/>
            <person name="Miranda M."/>
            <person name="Nguyen M."/>
            <person name="Nierman W.C."/>
            <person name="Osborne B.I."/>
            <person name="Pai G."/>
            <person name="Peterson J."/>
            <person name="Pham P.K."/>
            <person name="Rizzo M."/>
            <person name="Rooney T."/>
            <person name="Rowley D."/>
            <person name="Sakano H."/>
            <person name="Salzberg S.L."/>
            <person name="Schwartz J.R."/>
            <person name="Shinn P."/>
            <person name="Southwick A.M."/>
            <person name="Sun H."/>
            <person name="Tallon L.J."/>
            <person name="Tambunga G."/>
            <person name="Toriumi M.J."/>
            <person name="Town C.D."/>
            <person name="Utterback T."/>
            <person name="Van Aken S."/>
            <person name="Vaysberg M."/>
            <person name="Vysotskaia V.S."/>
            <person name="Walker M."/>
            <person name="Wu D."/>
            <person name="Yu G."/>
            <person name="Fraser C.M."/>
            <person name="Venter J.C."/>
            <person name="Davis R.W."/>
        </authorList>
    </citation>
    <scope>NUCLEOTIDE SEQUENCE [LARGE SCALE GENOMIC DNA]</scope>
    <source>
        <strain>cv. Columbia</strain>
    </source>
</reference>
<reference key="2">
    <citation type="journal article" date="2017" name="Plant J.">
        <title>Araport11: a complete reannotation of the Arabidopsis thaliana reference genome.</title>
        <authorList>
            <person name="Cheng C.Y."/>
            <person name="Krishnakumar V."/>
            <person name="Chan A.P."/>
            <person name="Thibaud-Nissen F."/>
            <person name="Schobel S."/>
            <person name="Town C.D."/>
        </authorList>
    </citation>
    <scope>GENOME REANNOTATION</scope>
    <source>
        <strain>cv. Columbia</strain>
    </source>
</reference>
<reference key="3">
    <citation type="journal article" date="2005" name="Plant Physiol.">
        <title>Analysis of the cDNAs of hypothetical genes on Arabidopsis chromosome 2 reveals numerous transcript variants.</title>
        <authorList>
            <person name="Xiao Y.-L."/>
            <person name="Smith S.R."/>
            <person name="Ishmael N."/>
            <person name="Redman J.C."/>
            <person name="Kumar N."/>
            <person name="Monaghan E.L."/>
            <person name="Ayele M."/>
            <person name="Haas B.J."/>
            <person name="Wu H.C."/>
            <person name="Town C.D."/>
        </authorList>
    </citation>
    <scope>NUCLEOTIDE SEQUENCE [LARGE SCALE MRNA]</scope>
    <source>
        <strain>cv. Columbia</strain>
    </source>
</reference>
<reference key="4">
    <citation type="submission" date="2005-02" db="EMBL/GenBank/DDBJ databases">
        <authorList>
            <person name="Underwood B.A."/>
            <person name="Xiao Y.-L."/>
            <person name="Moskal W.A. Jr."/>
            <person name="Monaghan E.L."/>
            <person name="Wang W."/>
            <person name="Redman J.C."/>
            <person name="Wu H.C."/>
            <person name="Utterback T."/>
            <person name="Town C.D."/>
        </authorList>
    </citation>
    <scope>NUCLEOTIDE SEQUENCE [LARGE SCALE MRNA]</scope>
    <source>
        <strain>cv. Columbia</strain>
    </source>
</reference>
<reference key="5">
    <citation type="journal article" date="2002" name="J. Biol. Chem.">
        <title>Transport of UDP-galactose in plants. Identification and functional characterization of AtUTr1, an Arabidopsis thaliana UDP-galactose/UDP-glucose transporter.</title>
        <authorList>
            <person name="Norambuena L."/>
            <person name="Marchant L."/>
            <person name="Berninsone P."/>
            <person name="Hirschberg C.B."/>
            <person name="Silva H."/>
            <person name="Orellana A."/>
        </authorList>
    </citation>
    <scope>GENE FAMILY</scope>
    <scope>NOMENCLATURE</scope>
</reference>
<reference key="6">
    <citation type="journal article" date="2005" name="Glycobiology">
        <title>Molecular cloning of two Arabidopsis UDP-galactose transporters by complementation of a deficient Chinese hamster ovary cell line.</title>
        <authorList>
            <person name="Bakker H."/>
            <person name="Routier F."/>
            <person name="Oelmann S."/>
            <person name="Jordi W."/>
            <person name="Lommen A."/>
            <person name="Gerardy-Schahn R."/>
            <person name="Bosch D."/>
        </authorList>
    </citation>
    <scope>GENE FAMILY</scope>
    <source>
        <strain>cv. Columbia</strain>
    </source>
</reference>
<reference key="7">
    <citation type="journal article" date="2014" name="Proc. Natl. Acad. Sci. U.S.A.">
        <title>The Golgi localized bifunctional UDP-rhamnose/UDP-galactose transporter family of Arabidopsis.</title>
        <authorList>
            <person name="Rautengarten C."/>
            <person name="Ebert B."/>
            <person name="Moreno I."/>
            <person name="Temple H."/>
            <person name="Herter T."/>
            <person name="Link B."/>
            <person name="Donas-Cofre D."/>
            <person name="Moreno A."/>
            <person name="Saez-Aguayo S."/>
            <person name="Blanco F."/>
            <person name="Mortimer J.C."/>
            <person name="Schultink A."/>
            <person name="Reiter W.D."/>
            <person name="Dupree P."/>
            <person name="Pauly M."/>
            <person name="Heazlewood J.L."/>
            <person name="Scheller H.V."/>
            <person name="Orellana A."/>
        </authorList>
    </citation>
    <scope>GENE FAMILY</scope>
</reference>
<proteinExistence type="evidence at transcript level"/>
<name>UTR4_ARATH</name>
<keyword id="KW-0050">Antiport</keyword>
<keyword id="KW-0472">Membrane</keyword>
<keyword id="KW-1185">Reference proteome</keyword>
<keyword id="KW-0762">Sugar transport</keyword>
<keyword id="KW-0812">Transmembrane</keyword>
<keyword id="KW-1133">Transmembrane helix</keyword>
<keyword id="KW-0813">Transport</keyword>
<comment type="function">
    <text evidence="1">Sugar transporter involved in the transport of nucleotide-sugars from cytoplasm into the Golgi and/or the endoplasmic reticulum.</text>
</comment>
<comment type="subcellular location">
    <subcellularLocation>
        <location evidence="5">Membrane</location>
        <topology evidence="5">Multi-pass membrane protein</topology>
    </subcellularLocation>
</comment>
<comment type="similarity">
    <text evidence="5">Belongs to the nucleotide-sugar transporter family. UDP-galactose:UMP antiporter (TC 2.A.7.11) subfamily.</text>
</comment>